<comment type="function">
    <text evidence="1">Mitochondrial membrane ATP synthase (F(1)F(0) ATP synthase or Complex V) produces ATP from ADP in the presence of a proton gradient across the membrane which is generated by electron transport complexes of the respiratory chain. F-type ATPases consist of two structural domains, F(1) - containing the extramembraneous catalytic core, and F(0) - containing the membrane proton channel, linked together by a central stalk and a peripheral stalk. During catalysis, ATP synthesis in the catalytic domain of F(1) is coupled via a rotary mechanism of the central stalk subunits to proton translocation. Part of the complex F(0) domain and the peripheric stalk, which acts as a stator to hold the catalytic alpha(3)beta(3) subcomplex and subunit a/atp6 static relative to the rotary elements (By similarity).</text>
</comment>
<comment type="subunit">
    <text evidence="1">F-type ATPases have 2 components, CF(1) - the catalytic core - and CF(0) - the membrane proton channel. In yeast, the dimeric form of ATP synthase consists of 17 polypeptides: alpha, beta, gamma, delta, epsilon, 4 (B), 5 (OSCP), 6 (A), 8, 9 (C), d, E (Tim11), f, g, h, i/j and k (By similarity).</text>
</comment>
<comment type="subcellular location">
    <subcellularLocation>
        <location evidence="1">Mitochondrion</location>
    </subcellularLocation>
    <subcellularLocation>
        <location evidence="1">Mitochondrion inner membrane</location>
    </subcellularLocation>
</comment>
<comment type="similarity">
    <text evidence="2">Belongs to the eukaryotic ATPase B chain family.</text>
</comment>
<dbReference type="EMBL" id="CM002236">
    <property type="protein sequence ID" value="EAA35070.1"/>
    <property type="molecule type" value="Genomic_DNA"/>
</dbReference>
<dbReference type="RefSeq" id="XP_964306.1">
    <property type="nucleotide sequence ID" value="XM_959213.3"/>
</dbReference>
<dbReference type="SMR" id="Q7SE71"/>
<dbReference type="FunCoup" id="Q7SE71">
    <property type="interactions" value="451"/>
</dbReference>
<dbReference type="STRING" id="367110.Q7SE71"/>
<dbReference type="PaxDb" id="5141-EFNCRP00000000893"/>
<dbReference type="EnsemblFungi" id="EAA35070">
    <property type="protein sequence ID" value="EAA35070"/>
    <property type="gene ID" value="NCU00502"/>
</dbReference>
<dbReference type="GeneID" id="3880466"/>
<dbReference type="KEGG" id="ncr:NCU00502"/>
<dbReference type="VEuPathDB" id="FungiDB:NCU00502"/>
<dbReference type="HOGENOM" id="CLU_077208_0_0_1"/>
<dbReference type="InParanoid" id="Q7SE71"/>
<dbReference type="OrthoDB" id="67388at2759"/>
<dbReference type="Proteomes" id="UP000001805">
    <property type="component" value="Chromosome 1, Linkage Group I"/>
</dbReference>
<dbReference type="GO" id="GO:0005743">
    <property type="term" value="C:mitochondrial inner membrane"/>
    <property type="evidence" value="ECO:0007669"/>
    <property type="project" value="UniProtKB-SubCell"/>
</dbReference>
<dbReference type="GO" id="GO:0045259">
    <property type="term" value="C:proton-transporting ATP synthase complex"/>
    <property type="evidence" value="ECO:0007669"/>
    <property type="project" value="UniProtKB-KW"/>
</dbReference>
<dbReference type="GO" id="GO:0046933">
    <property type="term" value="F:proton-transporting ATP synthase activity, rotational mechanism"/>
    <property type="evidence" value="ECO:0007669"/>
    <property type="project" value="EnsemblFungi"/>
</dbReference>
<dbReference type="GO" id="GO:0046961">
    <property type="term" value="F:proton-transporting ATPase activity, rotational mechanism"/>
    <property type="evidence" value="ECO:0007669"/>
    <property type="project" value="EnsemblFungi"/>
</dbReference>
<dbReference type="GO" id="GO:0065003">
    <property type="term" value="P:protein-containing complex assembly"/>
    <property type="evidence" value="ECO:0007669"/>
    <property type="project" value="EnsemblFungi"/>
</dbReference>
<dbReference type="GO" id="GO:0015986">
    <property type="term" value="P:proton motive force-driven ATP synthesis"/>
    <property type="evidence" value="ECO:0000318"/>
    <property type="project" value="GO_Central"/>
</dbReference>
<dbReference type="FunFam" id="1.20.5.2210:FF:000002">
    <property type="entry name" value="ATP synthase subunit 4 mitochondrial"/>
    <property type="match status" value="1"/>
</dbReference>
<dbReference type="Gene3D" id="1.20.5.2210">
    <property type="match status" value="1"/>
</dbReference>
<dbReference type="InterPro" id="IPR008688">
    <property type="entry name" value="ATP_synth_Bsub_B/MI25"/>
</dbReference>
<dbReference type="InterPro" id="IPR013837">
    <property type="entry name" value="ATP_synth_F0_suB"/>
</dbReference>
<dbReference type="PANTHER" id="PTHR12733:SF3">
    <property type="entry name" value="ATP SYNTHASE F(0) COMPLEX SUBUNIT B1, MITOCHONDRIAL"/>
    <property type="match status" value="1"/>
</dbReference>
<dbReference type="PANTHER" id="PTHR12733">
    <property type="entry name" value="MITOCHONDRIAL ATP SYNTHASE B CHAIN"/>
    <property type="match status" value="1"/>
</dbReference>
<dbReference type="Pfam" id="PF05405">
    <property type="entry name" value="Mt_ATP-synt_B"/>
    <property type="match status" value="1"/>
</dbReference>
<dbReference type="SUPFAM" id="SSF161060">
    <property type="entry name" value="ATP synthase B chain-like"/>
    <property type="match status" value="1"/>
</dbReference>
<gene>
    <name type="primary">atp-3</name>
    <name type="synonym">atp4</name>
    <name type="ORF">NCU00502</name>
</gene>
<keyword id="KW-0138">CF(0)</keyword>
<keyword id="KW-0375">Hydrogen ion transport</keyword>
<keyword id="KW-0406">Ion transport</keyword>
<keyword id="KW-0472">Membrane</keyword>
<keyword id="KW-0496">Mitochondrion</keyword>
<keyword id="KW-0999">Mitochondrion inner membrane</keyword>
<keyword id="KW-1185">Reference proteome</keyword>
<keyword id="KW-0809">Transit peptide</keyword>
<keyword id="KW-0813">Transport</keyword>
<accession>Q7SE71</accession>
<proteinExistence type="inferred from homology"/>
<reference key="1">
    <citation type="journal article" date="2003" name="Nature">
        <title>The genome sequence of the filamentous fungus Neurospora crassa.</title>
        <authorList>
            <person name="Galagan J.E."/>
            <person name="Calvo S.E."/>
            <person name="Borkovich K.A."/>
            <person name="Selker E.U."/>
            <person name="Read N.D."/>
            <person name="Jaffe D.B."/>
            <person name="FitzHugh W."/>
            <person name="Ma L.-J."/>
            <person name="Smirnov S."/>
            <person name="Purcell S."/>
            <person name="Rehman B."/>
            <person name="Elkins T."/>
            <person name="Engels R."/>
            <person name="Wang S."/>
            <person name="Nielsen C.B."/>
            <person name="Butler J."/>
            <person name="Endrizzi M."/>
            <person name="Qui D."/>
            <person name="Ianakiev P."/>
            <person name="Bell-Pedersen D."/>
            <person name="Nelson M.A."/>
            <person name="Werner-Washburne M."/>
            <person name="Selitrennikoff C.P."/>
            <person name="Kinsey J.A."/>
            <person name="Braun E.L."/>
            <person name="Zelter A."/>
            <person name="Schulte U."/>
            <person name="Kothe G.O."/>
            <person name="Jedd G."/>
            <person name="Mewes H.-W."/>
            <person name="Staben C."/>
            <person name="Marcotte E."/>
            <person name="Greenberg D."/>
            <person name="Roy A."/>
            <person name="Foley K."/>
            <person name="Naylor J."/>
            <person name="Stange-Thomann N."/>
            <person name="Barrett R."/>
            <person name="Gnerre S."/>
            <person name="Kamal M."/>
            <person name="Kamvysselis M."/>
            <person name="Mauceli E.W."/>
            <person name="Bielke C."/>
            <person name="Rudd S."/>
            <person name="Frishman D."/>
            <person name="Krystofova S."/>
            <person name="Rasmussen C."/>
            <person name="Metzenberg R.L."/>
            <person name="Perkins D.D."/>
            <person name="Kroken S."/>
            <person name="Cogoni C."/>
            <person name="Macino G."/>
            <person name="Catcheside D.E.A."/>
            <person name="Li W."/>
            <person name="Pratt R.J."/>
            <person name="Osmani S.A."/>
            <person name="DeSouza C.P.C."/>
            <person name="Glass N.L."/>
            <person name="Orbach M.J."/>
            <person name="Berglund J.A."/>
            <person name="Voelker R."/>
            <person name="Yarden O."/>
            <person name="Plamann M."/>
            <person name="Seiler S."/>
            <person name="Dunlap J.C."/>
            <person name="Radford A."/>
            <person name="Aramayo R."/>
            <person name="Natvig D.O."/>
            <person name="Alex L.A."/>
            <person name="Mannhaupt G."/>
            <person name="Ebbole D.J."/>
            <person name="Freitag M."/>
            <person name="Paulsen I."/>
            <person name="Sachs M.S."/>
            <person name="Lander E.S."/>
            <person name="Nusbaum C."/>
            <person name="Birren B.W."/>
        </authorList>
    </citation>
    <scope>NUCLEOTIDE SEQUENCE [LARGE SCALE GENOMIC DNA]</scope>
    <source>
        <strain>ATCC 24698 / 74-OR23-1A / CBS 708.71 / DSM 1257 / FGSC 987</strain>
    </source>
</reference>
<organism>
    <name type="scientific">Neurospora crassa (strain ATCC 24698 / 74-OR23-1A / CBS 708.71 / DSM 1257 / FGSC 987)</name>
    <dbReference type="NCBI Taxonomy" id="367110"/>
    <lineage>
        <taxon>Eukaryota</taxon>
        <taxon>Fungi</taxon>
        <taxon>Dikarya</taxon>
        <taxon>Ascomycota</taxon>
        <taxon>Pezizomycotina</taxon>
        <taxon>Sordariomycetes</taxon>
        <taxon>Sordariomycetidae</taxon>
        <taxon>Sordariales</taxon>
        <taxon>Sordariaceae</taxon>
        <taxon>Neurospora</taxon>
    </lineage>
</organism>
<feature type="transit peptide" description="Mitochondrion" evidence="1">
    <location>
        <begin position="1"/>
        <end position="35"/>
    </location>
</feature>
<feature type="chain" id="PRO_0000002521" description="ATP synthase subunit 4, mitochondrial">
    <location>
        <begin position="36"/>
        <end position="241"/>
    </location>
</feature>
<evidence type="ECO:0000250" key="1"/>
<evidence type="ECO:0000305" key="2"/>
<name>ATPF_NEUCR</name>
<protein>
    <recommendedName>
        <fullName>ATP synthase subunit 4, mitochondrial</fullName>
    </recommendedName>
</protein>
<sequence length="241" mass="26276">MASRLARTAVGAARLRPSVVPRVLPALSTVASPRYSSGVPSEDPKTKAQSIIDSLPGSNLMSKTAILSSAAGLSIYALSNEYYVVNEETVVAFCLLSVWGGLIKFGGPLYKKWADEQSDKIKNILNSARADHTQAVKTRIGDVKQMSGVIDITKTLFAVSKETAKLEAEAYELEQRTALAAEAKTVLDSWVRYESQVKQRQQKELAQTVIAKVQKELENPKVLKQILEQSVADVEKIVSKA</sequence>